<feature type="chain" id="PRO_0000107058" description="Uncharacterized protein MJ0808.1">
    <location>
        <begin position="1"/>
        <end position="138"/>
    </location>
</feature>
<accession>P81321</accession>
<name>Y80A_METJA</name>
<gene>
    <name type="ordered locus">MJ0808.1</name>
</gene>
<organism>
    <name type="scientific">Methanocaldococcus jannaschii (strain ATCC 43067 / DSM 2661 / JAL-1 / JCM 10045 / NBRC 100440)</name>
    <name type="common">Methanococcus jannaschii</name>
    <dbReference type="NCBI Taxonomy" id="243232"/>
    <lineage>
        <taxon>Archaea</taxon>
        <taxon>Methanobacteriati</taxon>
        <taxon>Methanobacteriota</taxon>
        <taxon>Methanomada group</taxon>
        <taxon>Methanococci</taxon>
        <taxon>Methanococcales</taxon>
        <taxon>Methanocaldococcaceae</taxon>
        <taxon>Methanocaldococcus</taxon>
    </lineage>
</organism>
<dbReference type="EMBL" id="L77117">
    <property type="protein sequence ID" value="AAB98820.1"/>
    <property type="molecule type" value="Genomic_DNA"/>
</dbReference>
<dbReference type="RefSeq" id="WP_010870319.1">
    <property type="nucleotide sequence ID" value="NC_000909.1"/>
</dbReference>
<dbReference type="SMR" id="P81321"/>
<dbReference type="PaxDb" id="243232-MJ_0808.1"/>
<dbReference type="EnsemblBacteria" id="AAB98820">
    <property type="protein sequence ID" value="AAB98820"/>
    <property type="gene ID" value="MJ_0808.1"/>
</dbReference>
<dbReference type="GeneID" id="1451691"/>
<dbReference type="KEGG" id="mja:MJ_0808.1"/>
<dbReference type="HOGENOM" id="CLU_1850646_0_0_2"/>
<dbReference type="InParanoid" id="P81321"/>
<dbReference type="Proteomes" id="UP000000805">
    <property type="component" value="Chromosome"/>
</dbReference>
<protein>
    <recommendedName>
        <fullName>Uncharacterized protein MJ0808.1</fullName>
    </recommendedName>
</protein>
<keyword id="KW-1185">Reference proteome</keyword>
<proteinExistence type="predicted"/>
<sequence>MLKEIKNDYDKIREKMTQKIQELNQQITQIKKQIQIIEQNNLSDQQNQTIQKIKRQIYSIEFDILRVESNRSNMIYSKTFEDMCEYLDSHSGIGRIFAESFMREIEKNIQLMKQLVMMEDQIIKIKQEIRMIEKDLKI</sequence>
<reference key="1">
    <citation type="journal article" date="1996" name="Science">
        <title>Complete genome sequence of the methanogenic archaeon, Methanococcus jannaschii.</title>
        <authorList>
            <person name="Bult C.J."/>
            <person name="White O."/>
            <person name="Olsen G.J."/>
            <person name="Zhou L."/>
            <person name="Fleischmann R.D."/>
            <person name="Sutton G.G."/>
            <person name="Blake J.A."/>
            <person name="FitzGerald L.M."/>
            <person name="Clayton R.A."/>
            <person name="Gocayne J.D."/>
            <person name="Kerlavage A.R."/>
            <person name="Dougherty B.A."/>
            <person name="Tomb J.-F."/>
            <person name="Adams M.D."/>
            <person name="Reich C.I."/>
            <person name="Overbeek R."/>
            <person name="Kirkness E.F."/>
            <person name="Weinstock K.G."/>
            <person name="Merrick J.M."/>
            <person name="Glodek A."/>
            <person name="Scott J.L."/>
            <person name="Geoghagen N.S.M."/>
            <person name="Weidman J.F."/>
            <person name="Fuhrmann J.L."/>
            <person name="Nguyen D."/>
            <person name="Utterback T.R."/>
            <person name="Kelley J.M."/>
            <person name="Peterson J.D."/>
            <person name="Sadow P.W."/>
            <person name="Hanna M.C."/>
            <person name="Cotton M.D."/>
            <person name="Roberts K.M."/>
            <person name="Hurst M.A."/>
            <person name="Kaine B.P."/>
            <person name="Borodovsky M."/>
            <person name="Klenk H.-P."/>
            <person name="Fraser C.M."/>
            <person name="Smith H.O."/>
            <person name="Woese C.R."/>
            <person name="Venter J.C."/>
        </authorList>
    </citation>
    <scope>NUCLEOTIDE SEQUENCE [LARGE SCALE GENOMIC DNA]</scope>
    <source>
        <strain>ATCC 43067 / DSM 2661 / JAL-1 / JCM 10045 / NBRC 100440</strain>
    </source>
</reference>